<name>AROE_AERHH</name>
<gene>
    <name evidence="1" type="primary">aroE</name>
    <name type="ordered locus">AHA_0266</name>
</gene>
<dbReference type="EC" id="1.1.1.25" evidence="1"/>
<dbReference type="EMBL" id="CP000462">
    <property type="protein sequence ID" value="ABK36524.1"/>
    <property type="molecule type" value="Genomic_DNA"/>
</dbReference>
<dbReference type="RefSeq" id="WP_011704274.1">
    <property type="nucleotide sequence ID" value="NC_008570.1"/>
</dbReference>
<dbReference type="RefSeq" id="YP_854794.1">
    <property type="nucleotide sequence ID" value="NC_008570.1"/>
</dbReference>
<dbReference type="SMR" id="A0KEX8"/>
<dbReference type="STRING" id="380703.AHA_0266"/>
<dbReference type="EnsemblBacteria" id="ABK36524">
    <property type="protein sequence ID" value="ABK36524"/>
    <property type="gene ID" value="AHA_0266"/>
</dbReference>
<dbReference type="GeneID" id="4490197"/>
<dbReference type="KEGG" id="aha:AHA_0266"/>
<dbReference type="PATRIC" id="fig|380703.7.peg.253"/>
<dbReference type="eggNOG" id="COG0169">
    <property type="taxonomic scope" value="Bacteria"/>
</dbReference>
<dbReference type="HOGENOM" id="CLU_044063_2_1_6"/>
<dbReference type="OrthoDB" id="9776868at2"/>
<dbReference type="UniPathway" id="UPA00053">
    <property type="reaction ID" value="UER00087"/>
</dbReference>
<dbReference type="Proteomes" id="UP000000756">
    <property type="component" value="Chromosome"/>
</dbReference>
<dbReference type="GO" id="GO:0005829">
    <property type="term" value="C:cytosol"/>
    <property type="evidence" value="ECO:0007669"/>
    <property type="project" value="TreeGrafter"/>
</dbReference>
<dbReference type="GO" id="GO:0050661">
    <property type="term" value="F:NADP binding"/>
    <property type="evidence" value="ECO:0007669"/>
    <property type="project" value="InterPro"/>
</dbReference>
<dbReference type="GO" id="GO:0004764">
    <property type="term" value="F:shikimate 3-dehydrogenase (NADP+) activity"/>
    <property type="evidence" value="ECO:0007669"/>
    <property type="project" value="UniProtKB-UniRule"/>
</dbReference>
<dbReference type="GO" id="GO:0008652">
    <property type="term" value="P:amino acid biosynthetic process"/>
    <property type="evidence" value="ECO:0007669"/>
    <property type="project" value="UniProtKB-KW"/>
</dbReference>
<dbReference type="GO" id="GO:0009073">
    <property type="term" value="P:aromatic amino acid family biosynthetic process"/>
    <property type="evidence" value="ECO:0007669"/>
    <property type="project" value="UniProtKB-KW"/>
</dbReference>
<dbReference type="GO" id="GO:0009423">
    <property type="term" value="P:chorismate biosynthetic process"/>
    <property type="evidence" value="ECO:0007669"/>
    <property type="project" value="UniProtKB-UniRule"/>
</dbReference>
<dbReference type="GO" id="GO:0019632">
    <property type="term" value="P:shikimate metabolic process"/>
    <property type="evidence" value="ECO:0007669"/>
    <property type="project" value="InterPro"/>
</dbReference>
<dbReference type="CDD" id="cd01065">
    <property type="entry name" value="NAD_bind_Shikimate_DH"/>
    <property type="match status" value="1"/>
</dbReference>
<dbReference type="FunFam" id="3.40.50.10860:FF:000006">
    <property type="entry name" value="Shikimate dehydrogenase (NADP(+))"/>
    <property type="match status" value="1"/>
</dbReference>
<dbReference type="FunFam" id="3.40.50.720:FF:000104">
    <property type="entry name" value="Shikimate dehydrogenase (NADP(+))"/>
    <property type="match status" value="1"/>
</dbReference>
<dbReference type="Gene3D" id="3.40.50.10860">
    <property type="entry name" value="Leucine Dehydrogenase, chain A, domain 1"/>
    <property type="match status" value="1"/>
</dbReference>
<dbReference type="Gene3D" id="3.40.50.720">
    <property type="entry name" value="NAD(P)-binding Rossmann-like Domain"/>
    <property type="match status" value="1"/>
</dbReference>
<dbReference type="HAMAP" id="MF_00222">
    <property type="entry name" value="Shikimate_DH_AroE"/>
    <property type="match status" value="1"/>
</dbReference>
<dbReference type="InterPro" id="IPR046346">
    <property type="entry name" value="Aminoacid_DH-like_N_sf"/>
</dbReference>
<dbReference type="InterPro" id="IPR036291">
    <property type="entry name" value="NAD(P)-bd_dom_sf"/>
</dbReference>
<dbReference type="InterPro" id="IPR041121">
    <property type="entry name" value="SDH_C"/>
</dbReference>
<dbReference type="InterPro" id="IPR011342">
    <property type="entry name" value="Shikimate_DH"/>
</dbReference>
<dbReference type="InterPro" id="IPR013708">
    <property type="entry name" value="Shikimate_DH-bd_N"/>
</dbReference>
<dbReference type="InterPro" id="IPR022893">
    <property type="entry name" value="Shikimate_DH_fam"/>
</dbReference>
<dbReference type="InterPro" id="IPR006151">
    <property type="entry name" value="Shikm_DH/Glu-tRNA_Rdtase"/>
</dbReference>
<dbReference type="NCBIfam" id="TIGR00507">
    <property type="entry name" value="aroE"/>
    <property type="match status" value="1"/>
</dbReference>
<dbReference type="NCBIfam" id="NF001310">
    <property type="entry name" value="PRK00258.1-2"/>
    <property type="match status" value="1"/>
</dbReference>
<dbReference type="PANTHER" id="PTHR21089:SF1">
    <property type="entry name" value="BIFUNCTIONAL 3-DEHYDROQUINATE DEHYDRATASE_SHIKIMATE DEHYDROGENASE, CHLOROPLASTIC"/>
    <property type="match status" value="1"/>
</dbReference>
<dbReference type="PANTHER" id="PTHR21089">
    <property type="entry name" value="SHIKIMATE DEHYDROGENASE"/>
    <property type="match status" value="1"/>
</dbReference>
<dbReference type="Pfam" id="PF18317">
    <property type="entry name" value="SDH_C"/>
    <property type="match status" value="1"/>
</dbReference>
<dbReference type="Pfam" id="PF01488">
    <property type="entry name" value="Shikimate_DH"/>
    <property type="match status" value="1"/>
</dbReference>
<dbReference type="Pfam" id="PF08501">
    <property type="entry name" value="Shikimate_dh_N"/>
    <property type="match status" value="1"/>
</dbReference>
<dbReference type="SUPFAM" id="SSF53223">
    <property type="entry name" value="Aminoacid dehydrogenase-like, N-terminal domain"/>
    <property type="match status" value="1"/>
</dbReference>
<dbReference type="SUPFAM" id="SSF51735">
    <property type="entry name" value="NAD(P)-binding Rossmann-fold domains"/>
    <property type="match status" value="1"/>
</dbReference>
<keyword id="KW-0028">Amino-acid biosynthesis</keyword>
<keyword id="KW-0057">Aromatic amino acid biosynthesis</keyword>
<keyword id="KW-0521">NADP</keyword>
<keyword id="KW-0560">Oxidoreductase</keyword>
<keyword id="KW-1185">Reference proteome</keyword>
<accession>A0KEX8</accession>
<proteinExistence type="inferred from homology"/>
<comment type="function">
    <text evidence="1">Involved in the biosynthesis of the chorismate, which leads to the biosynthesis of aromatic amino acids. Catalyzes the reversible NADPH linked reduction of 3-dehydroshikimate (DHSA) to yield shikimate (SA).</text>
</comment>
<comment type="catalytic activity">
    <reaction evidence="1">
        <text>shikimate + NADP(+) = 3-dehydroshikimate + NADPH + H(+)</text>
        <dbReference type="Rhea" id="RHEA:17737"/>
        <dbReference type="ChEBI" id="CHEBI:15378"/>
        <dbReference type="ChEBI" id="CHEBI:16630"/>
        <dbReference type="ChEBI" id="CHEBI:36208"/>
        <dbReference type="ChEBI" id="CHEBI:57783"/>
        <dbReference type="ChEBI" id="CHEBI:58349"/>
        <dbReference type="EC" id="1.1.1.25"/>
    </reaction>
</comment>
<comment type="pathway">
    <text evidence="1">Metabolic intermediate biosynthesis; chorismate biosynthesis; chorismate from D-erythrose 4-phosphate and phosphoenolpyruvate: step 4/7.</text>
</comment>
<comment type="subunit">
    <text evidence="1">Homodimer.</text>
</comment>
<comment type="similarity">
    <text evidence="1">Belongs to the shikimate dehydrogenase family.</text>
</comment>
<sequence>MDRYLVFGHPVRHSKSPFIHTLFARQTQQELEYGLAEPAVEEFATSLRAFFAQGGKGCNVTVPFKEQAFALVDRLSPRARRAGAVNTIKLTDDGVLLGDNTDGAGLVADLKAHGVALAGSRILLLGAGGAARGALAPLLAEQPEALVIANRTHARAEQLAAEFRDLGAVSAQTYERLGGHFDLIINSTSASLQGELPPLVPALIHADIAIYDMMYGATDTPFIAWAKGQGARQTVDGLGMLVEQAAEAFTVWRGIRPGTKQVLRELKRNLGTL</sequence>
<reference key="1">
    <citation type="journal article" date="2006" name="J. Bacteriol.">
        <title>Genome sequence of Aeromonas hydrophila ATCC 7966T: jack of all trades.</title>
        <authorList>
            <person name="Seshadri R."/>
            <person name="Joseph S.W."/>
            <person name="Chopra A.K."/>
            <person name="Sha J."/>
            <person name="Shaw J."/>
            <person name="Graf J."/>
            <person name="Haft D.H."/>
            <person name="Wu M."/>
            <person name="Ren Q."/>
            <person name="Rosovitz M.J."/>
            <person name="Madupu R."/>
            <person name="Tallon L."/>
            <person name="Kim M."/>
            <person name="Jin S."/>
            <person name="Vuong H."/>
            <person name="Stine O.C."/>
            <person name="Ali A."/>
            <person name="Horneman A.J."/>
            <person name="Heidelberg J.F."/>
        </authorList>
    </citation>
    <scope>NUCLEOTIDE SEQUENCE [LARGE SCALE GENOMIC DNA]</scope>
    <source>
        <strain>ATCC 7966 / DSM 30187 / BCRC 13018 / CCUG 14551 / JCM 1027 / KCTC 2358 / NCIMB 9240 / NCTC 8049</strain>
    </source>
</reference>
<evidence type="ECO:0000255" key="1">
    <source>
        <dbReference type="HAMAP-Rule" id="MF_00222"/>
    </source>
</evidence>
<protein>
    <recommendedName>
        <fullName evidence="1">Shikimate dehydrogenase (NADP(+))</fullName>
        <shortName evidence="1">SDH</shortName>
        <ecNumber evidence="1">1.1.1.25</ecNumber>
    </recommendedName>
</protein>
<organism>
    <name type="scientific">Aeromonas hydrophila subsp. hydrophila (strain ATCC 7966 / DSM 30187 / BCRC 13018 / CCUG 14551 / JCM 1027 / KCTC 2358 / NCIMB 9240 / NCTC 8049)</name>
    <dbReference type="NCBI Taxonomy" id="380703"/>
    <lineage>
        <taxon>Bacteria</taxon>
        <taxon>Pseudomonadati</taxon>
        <taxon>Pseudomonadota</taxon>
        <taxon>Gammaproteobacteria</taxon>
        <taxon>Aeromonadales</taxon>
        <taxon>Aeromonadaceae</taxon>
        <taxon>Aeromonas</taxon>
    </lineage>
</organism>
<feature type="chain" id="PRO_1000021253" description="Shikimate dehydrogenase (NADP(+))">
    <location>
        <begin position="1"/>
        <end position="273"/>
    </location>
</feature>
<feature type="active site" description="Proton acceptor" evidence="1">
    <location>
        <position position="65"/>
    </location>
</feature>
<feature type="binding site" evidence="1">
    <location>
        <begin position="14"/>
        <end position="16"/>
    </location>
    <ligand>
        <name>shikimate</name>
        <dbReference type="ChEBI" id="CHEBI:36208"/>
    </ligand>
</feature>
<feature type="binding site" evidence="1">
    <location>
        <position position="61"/>
    </location>
    <ligand>
        <name>shikimate</name>
        <dbReference type="ChEBI" id="CHEBI:36208"/>
    </ligand>
</feature>
<feature type="binding site" evidence="1">
    <location>
        <position position="86"/>
    </location>
    <ligand>
        <name>shikimate</name>
        <dbReference type="ChEBI" id="CHEBI:36208"/>
    </ligand>
</feature>
<feature type="binding site" evidence="1">
    <location>
        <position position="102"/>
    </location>
    <ligand>
        <name>shikimate</name>
        <dbReference type="ChEBI" id="CHEBI:36208"/>
    </ligand>
</feature>
<feature type="binding site" evidence="1">
    <location>
        <begin position="126"/>
        <end position="130"/>
    </location>
    <ligand>
        <name>NADP(+)</name>
        <dbReference type="ChEBI" id="CHEBI:58349"/>
    </ligand>
</feature>
<feature type="binding site" evidence="1">
    <location>
        <begin position="150"/>
        <end position="155"/>
    </location>
    <ligand>
        <name>NADP(+)</name>
        <dbReference type="ChEBI" id="CHEBI:58349"/>
    </ligand>
</feature>
<feature type="binding site" evidence="1">
    <location>
        <position position="213"/>
    </location>
    <ligand>
        <name>NADP(+)</name>
        <dbReference type="ChEBI" id="CHEBI:58349"/>
    </ligand>
</feature>
<feature type="binding site" evidence="1">
    <location>
        <position position="215"/>
    </location>
    <ligand>
        <name>shikimate</name>
        <dbReference type="ChEBI" id="CHEBI:36208"/>
    </ligand>
</feature>
<feature type="binding site" evidence="1">
    <location>
        <position position="237"/>
    </location>
    <ligand>
        <name>NADP(+)</name>
        <dbReference type="ChEBI" id="CHEBI:58349"/>
    </ligand>
</feature>